<protein>
    <recommendedName>
        <fullName evidence="1">7-cyano-7-deazaguanine synthase</fullName>
        <ecNumber evidence="1">6.3.4.20</ecNumber>
    </recommendedName>
    <alternativeName>
        <fullName evidence="1">7-cyano-7-carbaguanine synthase</fullName>
    </alternativeName>
    <alternativeName>
        <fullName evidence="1">PreQ(0) synthase</fullName>
    </alternativeName>
    <alternativeName>
        <fullName evidence="1">Queuosine biosynthesis protein QueC</fullName>
    </alternativeName>
</protein>
<accession>C1DRE9</accession>
<comment type="function">
    <text evidence="1">Catalyzes the ATP-dependent conversion of 7-carboxy-7-deazaguanine (CDG) to 7-cyano-7-deazaguanine (preQ(0)).</text>
</comment>
<comment type="catalytic activity">
    <reaction evidence="1">
        <text>7-carboxy-7-deazaguanine + NH4(+) + ATP = 7-cyano-7-deazaguanine + ADP + phosphate + H2O + H(+)</text>
        <dbReference type="Rhea" id="RHEA:27982"/>
        <dbReference type="ChEBI" id="CHEBI:15377"/>
        <dbReference type="ChEBI" id="CHEBI:15378"/>
        <dbReference type="ChEBI" id="CHEBI:28938"/>
        <dbReference type="ChEBI" id="CHEBI:30616"/>
        <dbReference type="ChEBI" id="CHEBI:43474"/>
        <dbReference type="ChEBI" id="CHEBI:45075"/>
        <dbReference type="ChEBI" id="CHEBI:61036"/>
        <dbReference type="ChEBI" id="CHEBI:456216"/>
        <dbReference type="EC" id="6.3.4.20"/>
    </reaction>
</comment>
<comment type="cofactor">
    <cofactor evidence="1">
        <name>Zn(2+)</name>
        <dbReference type="ChEBI" id="CHEBI:29105"/>
    </cofactor>
    <text evidence="1">Binds 1 zinc ion per subunit.</text>
</comment>
<comment type="pathway">
    <text evidence="1">Purine metabolism; 7-cyano-7-deazaguanine biosynthesis.</text>
</comment>
<comment type="similarity">
    <text evidence="1">Belongs to the QueC family.</text>
</comment>
<reference key="1">
    <citation type="journal article" date="2009" name="J. Bacteriol.">
        <title>Genome sequence of Azotobacter vinelandii, an obligate aerobe specialized to support diverse anaerobic metabolic processes.</title>
        <authorList>
            <person name="Setubal J.C."/>
            <person name="Dos Santos P."/>
            <person name="Goldman B.S."/>
            <person name="Ertesvaag H."/>
            <person name="Espin G."/>
            <person name="Rubio L.M."/>
            <person name="Valla S."/>
            <person name="Almeida N.F."/>
            <person name="Balasubramanian D."/>
            <person name="Cromes L."/>
            <person name="Curatti L."/>
            <person name="Du Z."/>
            <person name="Godsy E."/>
            <person name="Goodner B."/>
            <person name="Hellner-Burris K."/>
            <person name="Hernandez J.A."/>
            <person name="Houmiel K."/>
            <person name="Imperial J."/>
            <person name="Kennedy C."/>
            <person name="Larson T.J."/>
            <person name="Latreille P."/>
            <person name="Ligon L.S."/>
            <person name="Lu J."/>
            <person name="Maerk M."/>
            <person name="Miller N.M."/>
            <person name="Norton S."/>
            <person name="O'Carroll I.P."/>
            <person name="Paulsen I."/>
            <person name="Raulfs E.C."/>
            <person name="Roemer R."/>
            <person name="Rosser J."/>
            <person name="Segura D."/>
            <person name="Slater S."/>
            <person name="Stricklin S.L."/>
            <person name="Studholme D.J."/>
            <person name="Sun J."/>
            <person name="Viana C.J."/>
            <person name="Wallin E."/>
            <person name="Wang B."/>
            <person name="Wheeler C."/>
            <person name="Zhu H."/>
            <person name="Dean D.R."/>
            <person name="Dixon R."/>
            <person name="Wood D."/>
        </authorList>
    </citation>
    <scope>NUCLEOTIDE SEQUENCE [LARGE SCALE GENOMIC DNA]</scope>
    <source>
        <strain>DJ / ATCC BAA-1303</strain>
    </source>
</reference>
<keyword id="KW-0067">ATP-binding</keyword>
<keyword id="KW-0436">Ligase</keyword>
<keyword id="KW-0479">Metal-binding</keyword>
<keyword id="KW-0547">Nucleotide-binding</keyword>
<keyword id="KW-0671">Queuosine biosynthesis</keyword>
<keyword id="KW-0862">Zinc</keyword>
<feature type="chain" id="PRO_1000215786" description="7-cyano-7-deazaguanine synthase">
    <location>
        <begin position="1"/>
        <end position="224"/>
    </location>
</feature>
<feature type="binding site" evidence="1">
    <location>
        <begin position="10"/>
        <end position="20"/>
    </location>
    <ligand>
        <name>ATP</name>
        <dbReference type="ChEBI" id="CHEBI:30616"/>
    </ligand>
</feature>
<feature type="binding site" evidence="1">
    <location>
        <position position="189"/>
    </location>
    <ligand>
        <name>Zn(2+)</name>
        <dbReference type="ChEBI" id="CHEBI:29105"/>
    </ligand>
</feature>
<feature type="binding site" evidence="1">
    <location>
        <position position="199"/>
    </location>
    <ligand>
        <name>Zn(2+)</name>
        <dbReference type="ChEBI" id="CHEBI:29105"/>
    </ligand>
</feature>
<feature type="binding site" evidence="1">
    <location>
        <position position="202"/>
    </location>
    <ligand>
        <name>Zn(2+)</name>
        <dbReference type="ChEBI" id="CHEBI:29105"/>
    </ligand>
</feature>
<feature type="binding site" evidence="1">
    <location>
        <position position="205"/>
    </location>
    <ligand>
        <name>Zn(2+)</name>
        <dbReference type="ChEBI" id="CHEBI:29105"/>
    </ligand>
</feature>
<name>QUEC_AZOVD</name>
<proteinExistence type="inferred from homology"/>
<gene>
    <name evidence="1" type="primary">queC</name>
    <name type="ordered locus">Avin_36600</name>
</gene>
<dbReference type="EC" id="6.3.4.20" evidence="1"/>
<dbReference type="EMBL" id="CP001157">
    <property type="protein sequence ID" value="ACO79807.1"/>
    <property type="molecule type" value="Genomic_DNA"/>
</dbReference>
<dbReference type="RefSeq" id="WP_012702182.1">
    <property type="nucleotide sequence ID" value="NC_012560.1"/>
</dbReference>
<dbReference type="SMR" id="C1DRE9"/>
<dbReference type="STRING" id="322710.Avin_36600"/>
<dbReference type="EnsemblBacteria" id="ACO79807">
    <property type="protein sequence ID" value="ACO79807"/>
    <property type="gene ID" value="Avin_36600"/>
</dbReference>
<dbReference type="GeneID" id="88186645"/>
<dbReference type="KEGG" id="avn:Avin_36600"/>
<dbReference type="eggNOG" id="COG0603">
    <property type="taxonomic scope" value="Bacteria"/>
</dbReference>
<dbReference type="HOGENOM" id="CLU_081854_1_1_6"/>
<dbReference type="OrthoDB" id="9789567at2"/>
<dbReference type="UniPathway" id="UPA00391"/>
<dbReference type="Proteomes" id="UP000002424">
    <property type="component" value="Chromosome"/>
</dbReference>
<dbReference type="GO" id="GO:0005524">
    <property type="term" value="F:ATP binding"/>
    <property type="evidence" value="ECO:0007669"/>
    <property type="project" value="UniProtKB-UniRule"/>
</dbReference>
<dbReference type="GO" id="GO:0016879">
    <property type="term" value="F:ligase activity, forming carbon-nitrogen bonds"/>
    <property type="evidence" value="ECO:0007669"/>
    <property type="project" value="UniProtKB-UniRule"/>
</dbReference>
<dbReference type="GO" id="GO:0008270">
    <property type="term" value="F:zinc ion binding"/>
    <property type="evidence" value="ECO:0007669"/>
    <property type="project" value="UniProtKB-UniRule"/>
</dbReference>
<dbReference type="GO" id="GO:0008616">
    <property type="term" value="P:queuosine biosynthetic process"/>
    <property type="evidence" value="ECO:0007669"/>
    <property type="project" value="UniProtKB-UniRule"/>
</dbReference>
<dbReference type="CDD" id="cd01995">
    <property type="entry name" value="QueC-like"/>
    <property type="match status" value="1"/>
</dbReference>
<dbReference type="FunFam" id="3.40.50.620:FF:000131">
    <property type="entry name" value="7-cyano-7-deazaguanine synthase"/>
    <property type="match status" value="1"/>
</dbReference>
<dbReference type="Gene3D" id="3.40.50.620">
    <property type="entry name" value="HUPs"/>
    <property type="match status" value="1"/>
</dbReference>
<dbReference type="HAMAP" id="MF_01633">
    <property type="entry name" value="QueC"/>
    <property type="match status" value="1"/>
</dbReference>
<dbReference type="InterPro" id="IPR018317">
    <property type="entry name" value="QueC"/>
</dbReference>
<dbReference type="InterPro" id="IPR014729">
    <property type="entry name" value="Rossmann-like_a/b/a_fold"/>
</dbReference>
<dbReference type="NCBIfam" id="TIGR00364">
    <property type="entry name" value="7-cyano-7-deazaguanine synthase QueC"/>
    <property type="match status" value="1"/>
</dbReference>
<dbReference type="PANTHER" id="PTHR42914">
    <property type="entry name" value="7-CYANO-7-DEAZAGUANINE SYNTHASE"/>
    <property type="match status" value="1"/>
</dbReference>
<dbReference type="PANTHER" id="PTHR42914:SF1">
    <property type="entry name" value="7-CYANO-7-DEAZAGUANINE SYNTHASE"/>
    <property type="match status" value="1"/>
</dbReference>
<dbReference type="Pfam" id="PF06508">
    <property type="entry name" value="QueC"/>
    <property type="match status" value="1"/>
</dbReference>
<dbReference type="PIRSF" id="PIRSF006293">
    <property type="entry name" value="ExsB"/>
    <property type="match status" value="1"/>
</dbReference>
<dbReference type="SUPFAM" id="SSF52402">
    <property type="entry name" value="Adenine nucleotide alpha hydrolases-like"/>
    <property type="match status" value="1"/>
</dbReference>
<organism>
    <name type="scientific">Azotobacter vinelandii (strain DJ / ATCC BAA-1303)</name>
    <dbReference type="NCBI Taxonomy" id="322710"/>
    <lineage>
        <taxon>Bacteria</taxon>
        <taxon>Pseudomonadati</taxon>
        <taxon>Pseudomonadota</taxon>
        <taxon>Gammaproteobacteria</taxon>
        <taxon>Pseudomonadales</taxon>
        <taxon>Pseudomonadaceae</taxon>
        <taxon>Azotobacter</taxon>
    </lineage>
</organism>
<sequence>MNEKKAVILLSGGLDSATVAALAKTEGYACYSMSFDYGQRHRAELRAAERVARQLGMVEHKVIGLDLGGIGGSALTDPAIAVPESPCEGIPVTYVPARNTVFLALALGWAEVLGARDIFIGVNAVDYSGYPDCRPAFIEAFERMANLATKAGVEGQGFRIRAPLQNLGKDEIIRAGLRHGVDYGLTVSCYQADEEGRACGRCDSCRLRAAGFATAGVTDPTRYG</sequence>
<evidence type="ECO:0000255" key="1">
    <source>
        <dbReference type="HAMAP-Rule" id="MF_01633"/>
    </source>
</evidence>